<name>Y1412_HAEIN</name>
<gene>
    <name type="ordered locus">HI_1412</name>
</gene>
<sequence>MNLQTIENFEQFLKVNDKQRIVTNSRHIATVFGKRHDNIIRDIKALVIEQDCGEFALLNFEETSYFDEWGRKQPMYQMTKNGFLLLVMGYRTQKAMKFKVEFIKAFDFMREKLQQEGYSLMHKYNELCIEHKAKKAFASLCGKGLREWKGDKPVLEATLKLFEDKMQIELPIK</sequence>
<proteinExistence type="predicted"/>
<feature type="chain" id="PRO_0000078049" description="Uncharacterized protein HI_1412">
    <location>
        <begin position="1"/>
        <end position="173"/>
    </location>
</feature>
<accession>P45197</accession>
<keyword id="KW-1185">Reference proteome</keyword>
<reference key="1">
    <citation type="journal article" date="1995" name="Science">
        <title>Whole-genome random sequencing and assembly of Haemophilus influenzae Rd.</title>
        <authorList>
            <person name="Fleischmann R.D."/>
            <person name="Adams M.D."/>
            <person name="White O."/>
            <person name="Clayton R.A."/>
            <person name="Kirkness E.F."/>
            <person name="Kerlavage A.R."/>
            <person name="Bult C.J."/>
            <person name="Tomb J.-F."/>
            <person name="Dougherty B.A."/>
            <person name="Merrick J.M."/>
            <person name="McKenney K."/>
            <person name="Sutton G.G."/>
            <person name="FitzHugh W."/>
            <person name="Fields C.A."/>
            <person name="Gocayne J.D."/>
            <person name="Scott J.D."/>
            <person name="Shirley R."/>
            <person name="Liu L.-I."/>
            <person name="Glodek A."/>
            <person name="Kelley J.M."/>
            <person name="Weidman J.F."/>
            <person name="Phillips C.A."/>
            <person name="Spriggs T."/>
            <person name="Hedblom E."/>
            <person name="Cotton M.D."/>
            <person name="Utterback T.R."/>
            <person name="Hanna M.C."/>
            <person name="Nguyen D.T."/>
            <person name="Saudek D.M."/>
            <person name="Brandon R.C."/>
            <person name="Fine L.D."/>
            <person name="Fritchman J.L."/>
            <person name="Fuhrmann J.L."/>
            <person name="Geoghagen N.S.M."/>
            <person name="Gnehm C.L."/>
            <person name="McDonald L.A."/>
            <person name="Small K.V."/>
            <person name="Fraser C.M."/>
            <person name="Smith H.O."/>
            <person name="Venter J.C."/>
        </authorList>
    </citation>
    <scope>NUCLEOTIDE SEQUENCE [LARGE SCALE GENOMIC DNA]</scope>
    <source>
        <strain>ATCC 51907 / DSM 11121 / KW20 / Rd</strain>
    </source>
</reference>
<organism>
    <name type="scientific">Haemophilus influenzae (strain ATCC 51907 / DSM 11121 / KW20 / Rd)</name>
    <dbReference type="NCBI Taxonomy" id="71421"/>
    <lineage>
        <taxon>Bacteria</taxon>
        <taxon>Pseudomonadati</taxon>
        <taxon>Pseudomonadota</taxon>
        <taxon>Gammaproteobacteria</taxon>
        <taxon>Pasteurellales</taxon>
        <taxon>Pasteurellaceae</taxon>
        <taxon>Haemophilus</taxon>
    </lineage>
</organism>
<protein>
    <recommendedName>
        <fullName>Uncharacterized protein HI_1412</fullName>
    </recommendedName>
</protein>
<dbReference type="EMBL" id="L42023">
    <property type="protein sequence ID" value="AAC23060.1"/>
    <property type="molecule type" value="Genomic_DNA"/>
</dbReference>
<dbReference type="PIR" id="G64171">
    <property type="entry name" value="G64171"/>
</dbReference>
<dbReference type="RefSeq" id="NP_439563.1">
    <property type="nucleotide sequence ID" value="NC_000907.1"/>
</dbReference>
<dbReference type="SMR" id="P45197"/>
<dbReference type="STRING" id="71421.HI_1412"/>
<dbReference type="EnsemblBacteria" id="AAC23060">
    <property type="protein sequence ID" value="AAC23060"/>
    <property type="gene ID" value="HI_1412"/>
</dbReference>
<dbReference type="KEGG" id="hin:HI_1412"/>
<dbReference type="PATRIC" id="fig|71421.8.peg.1471"/>
<dbReference type="eggNOG" id="COG3646">
    <property type="taxonomic scope" value="Bacteria"/>
</dbReference>
<dbReference type="HOGENOM" id="CLU_046670_13_0_6"/>
<dbReference type="OrthoDB" id="79831at2"/>
<dbReference type="PhylomeDB" id="P45197"/>
<dbReference type="BioCyc" id="HINF71421:G1GJ1-1436-MONOMER"/>
<dbReference type="Proteomes" id="UP000000579">
    <property type="component" value="Chromosome"/>
</dbReference>
<dbReference type="InterPro" id="IPR018877">
    <property type="entry name" value="Phage_P22_Orf201_C"/>
</dbReference>
<dbReference type="InterPro" id="IPR014054">
    <property type="entry name" value="Phage_regulatory_Rha"/>
</dbReference>
<dbReference type="NCBIfam" id="TIGR02681">
    <property type="entry name" value="phage_pRha"/>
    <property type="match status" value="1"/>
</dbReference>
<dbReference type="Pfam" id="PF10549">
    <property type="entry name" value="ORF11CD3"/>
    <property type="match status" value="1"/>
</dbReference>
<dbReference type="Pfam" id="PF09669">
    <property type="entry name" value="Phage_pRha"/>
    <property type="match status" value="1"/>
</dbReference>